<comment type="catalytic activity">
    <reaction evidence="1">
        <text>(2R)-O-phospho-3-sulfolactate + H2O = (2R)-3-sulfolactate + phosphate</text>
        <dbReference type="Rhea" id="RHEA:23416"/>
        <dbReference type="ChEBI" id="CHEBI:15377"/>
        <dbReference type="ChEBI" id="CHEBI:15597"/>
        <dbReference type="ChEBI" id="CHEBI:43474"/>
        <dbReference type="ChEBI" id="CHEBI:58738"/>
        <dbReference type="EC" id="3.1.3.71"/>
    </reaction>
</comment>
<comment type="cofactor">
    <cofactor evidence="1">
        <name>Mg(2+)</name>
        <dbReference type="ChEBI" id="CHEBI:18420"/>
    </cofactor>
</comment>
<comment type="similarity">
    <text evidence="1">Belongs to the ComB family.</text>
</comment>
<accession>Q46LT5</accession>
<proteinExistence type="inferred from homology"/>
<keyword id="KW-0378">Hydrolase</keyword>
<keyword id="KW-0460">Magnesium</keyword>
<keyword id="KW-1185">Reference proteome</keyword>
<feature type="chain" id="PRO_1000014468" description="Probable 2-phosphosulfolactate phosphatase">
    <location>
        <begin position="1"/>
        <end position="242"/>
    </location>
</feature>
<gene>
    <name evidence="1" type="primary">comB</name>
    <name type="ordered locus">PMN2A_0051</name>
</gene>
<dbReference type="EC" id="3.1.3.71" evidence="1"/>
<dbReference type="EMBL" id="CP000095">
    <property type="protein sequence ID" value="AAZ57543.1"/>
    <property type="molecule type" value="Genomic_DNA"/>
</dbReference>
<dbReference type="RefSeq" id="WP_011293585.1">
    <property type="nucleotide sequence ID" value="NC_007335.2"/>
</dbReference>
<dbReference type="SMR" id="Q46LT5"/>
<dbReference type="STRING" id="59920.PMN2A_0051"/>
<dbReference type="KEGG" id="pmn:PMN2A_0051"/>
<dbReference type="HOGENOM" id="CLU_070028_0_1_3"/>
<dbReference type="OrthoDB" id="4913at2"/>
<dbReference type="PhylomeDB" id="Q46LT5"/>
<dbReference type="Proteomes" id="UP000002535">
    <property type="component" value="Chromosome"/>
</dbReference>
<dbReference type="GO" id="GO:0050532">
    <property type="term" value="F:2-phosphosulfolactate phosphatase activity"/>
    <property type="evidence" value="ECO:0007669"/>
    <property type="project" value="UniProtKB-UniRule"/>
</dbReference>
<dbReference type="GO" id="GO:0000287">
    <property type="term" value="F:magnesium ion binding"/>
    <property type="evidence" value="ECO:0007669"/>
    <property type="project" value="UniProtKB-UniRule"/>
</dbReference>
<dbReference type="GO" id="GO:0050545">
    <property type="term" value="F:sulfopyruvate decarboxylase activity"/>
    <property type="evidence" value="ECO:0007669"/>
    <property type="project" value="TreeGrafter"/>
</dbReference>
<dbReference type="FunFam" id="3.90.1560.10:FF:000001">
    <property type="entry name" value="Probable 2-phosphosulfolactate phosphatase"/>
    <property type="match status" value="1"/>
</dbReference>
<dbReference type="Gene3D" id="3.90.1560.10">
    <property type="entry name" value="ComB-like"/>
    <property type="match status" value="1"/>
</dbReference>
<dbReference type="HAMAP" id="MF_00490">
    <property type="entry name" value="ComB"/>
    <property type="match status" value="1"/>
</dbReference>
<dbReference type="InterPro" id="IPR005238">
    <property type="entry name" value="ComB-like"/>
</dbReference>
<dbReference type="InterPro" id="IPR036702">
    <property type="entry name" value="ComB-like_sf"/>
</dbReference>
<dbReference type="NCBIfam" id="NF002053">
    <property type="entry name" value="PRK00886.1-2"/>
    <property type="match status" value="1"/>
</dbReference>
<dbReference type="PANTHER" id="PTHR37311">
    <property type="entry name" value="2-PHOSPHOSULFOLACTATE PHOSPHATASE-RELATED"/>
    <property type="match status" value="1"/>
</dbReference>
<dbReference type="PANTHER" id="PTHR37311:SF1">
    <property type="entry name" value="2-PHOSPHOSULFOLACTATE PHOSPHATASE-RELATED"/>
    <property type="match status" value="1"/>
</dbReference>
<dbReference type="Pfam" id="PF04029">
    <property type="entry name" value="2-ph_phosp"/>
    <property type="match status" value="1"/>
</dbReference>
<dbReference type="SUPFAM" id="SSF142823">
    <property type="entry name" value="ComB-like"/>
    <property type="match status" value="1"/>
</dbReference>
<protein>
    <recommendedName>
        <fullName evidence="1">Probable 2-phosphosulfolactate phosphatase</fullName>
        <ecNumber evidence="1">3.1.3.71</ecNumber>
    </recommendedName>
</protein>
<reference key="1">
    <citation type="journal article" date="2007" name="PLoS Genet.">
        <title>Patterns and implications of gene gain and loss in the evolution of Prochlorococcus.</title>
        <authorList>
            <person name="Kettler G.C."/>
            <person name="Martiny A.C."/>
            <person name="Huang K."/>
            <person name="Zucker J."/>
            <person name="Coleman M.L."/>
            <person name="Rodrigue S."/>
            <person name="Chen F."/>
            <person name="Lapidus A."/>
            <person name="Ferriera S."/>
            <person name="Johnson J."/>
            <person name="Steglich C."/>
            <person name="Church G.M."/>
            <person name="Richardson P."/>
            <person name="Chisholm S.W."/>
        </authorList>
    </citation>
    <scope>NUCLEOTIDE SEQUENCE [LARGE SCALE GENOMIC DNA]</scope>
    <source>
        <strain>NATL2A</strain>
    </source>
</reference>
<organism>
    <name type="scientific">Prochlorococcus marinus (strain NATL2A)</name>
    <dbReference type="NCBI Taxonomy" id="59920"/>
    <lineage>
        <taxon>Bacteria</taxon>
        <taxon>Bacillati</taxon>
        <taxon>Cyanobacteriota</taxon>
        <taxon>Cyanophyceae</taxon>
        <taxon>Synechococcales</taxon>
        <taxon>Prochlorococcaceae</taxon>
        <taxon>Prochlorococcus</taxon>
    </lineage>
</organism>
<sequence length="242" mass="26333">MKLSYFYVAADVPDGIIPESSVVIDVLRATTTIAWALENGADSVQVFADVDELKNQAKTFDSKEKILVGERGGKKLDGFDLGNSPLGVSPESVKGKRVFMSTTNGTRSLHRVRESKSLYTMALPNRKAIAERLKSDNPKEVWIVGSGWEGSYSLEDSLAAGALASLLMDQLESVQIVNDELMASVALWKNWENDVEGCLRIASHGQRLAGIGNHDDDFACCASLDNLSVIPKQIEMGVLRSN</sequence>
<evidence type="ECO:0000255" key="1">
    <source>
        <dbReference type="HAMAP-Rule" id="MF_00490"/>
    </source>
</evidence>
<name>COMB_PROMT</name>